<name>MINE_PSYIN</name>
<dbReference type="EMBL" id="CP000510">
    <property type="protein sequence ID" value="ABM02918.1"/>
    <property type="molecule type" value="Genomic_DNA"/>
</dbReference>
<dbReference type="RefSeq" id="WP_011769481.1">
    <property type="nucleotide sequence ID" value="NC_008709.1"/>
</dbReference>
<dbReference type="SMR" id="A1STV3"/>
<dbReference type="STRING" id="357804.Ping_1079"/>
<dbReference type="KEGG" id="pin:Ping_1079"/>
<dbReference type="eggNOG" id="COG0851">
    <property type="taxonomic scope" value="Bacteria"/>
</dbReference>
<dbReference type="HOGENOM" id="CLU_137929_2_1_6"/>
<dbReference type="OrthoDB" id="9802655at2"/>
<dbReference type="Proteomes" id="UP000000639">
    <property type="component" value="Chromosome"/>
</dbReference>
<dbReference type="GO" id="GO:0051301">
    <property type="term" value="P:cell division"/>
    <property type="evidence" value="ECO:0007669"/>
    <property type="project" value="UniProtKB-KW"/>
</dbReference>
<dbReference type="GO" id="GO:0032955">
    <property type="term" value="P:regulation of division septum assembly"/>
    <property type="evidence" value="ECO:0007669"/>
    <property type="project" value="InterPro"/>
</dbReference>
<dbReference type="FunFam" id="3.30.1070.10:FF:000001">
    <property type="entry name" value="Cell division topological specificity factor"/>
    <property type="match status" value="1"/>
</dbReference>
<dbReference type="Gene3D" id="3.30.1070.10">
    <property type="entry name" value="Cell division topological specificity factor MinE"/>
    <property type="match status" value="1"/>
</dbReference>
<dbReference type="HAMAP" id="MF_00262">
    <property type="entry name" value="MinE"/>
    <property type="match status" value="1"/>
</dbReference>
<dbReference type="InterPro" id="IPR005527">
    <property type="entry name" value="MinE"/>
</dbReference>
<dbReference type="InterPro" id="IPR036707">
    <property type="entry name" value="MinE_sf"/>
</dbReference>
<dbReference type="NCBIfam" id="TIGR01215">
    <property type="entry name" value="minE"/>
    <property type="match status" value="1"/>
</dbReference>
<dbReference type="NCBIfam" id="NF001422">
    <property type="entry name" value="PRK00296.1"/>
    <property type="match status" value="1"/>
</dbReference>
<dbReference type="Pfam" id="PF03776">
    <property type="entry name" value="MinE"/>
    <property type="match status" value="1"/>
</dbReference>
<dbReference type="SUPFAM" id="SSF55229">
    <property type="entry name" value="Cell division protein MinE topological specificity domain"/>
    <property type="match status" value="1"/>
</dbReference>
<protein>
    <recommendedName>
        <fullName evidence="1">Cell division topological specificity factor</fullName>
    </recommendedName>
</protein>
<gene>
    <name evidence="1" type="primary">minE</name>
    <name type="ordered locus">Ping_1079</name>
</gene>
<sequence>MGLLGYFRSDIPKKSSAKLAKDRLQIIVAHEHSNAVCPAYLPEMQNEIIEVIRKFMKISNDDVKCEFSDNAEDDMSVLEVNITLPKNR</sequence>
<comment type="function">
    <text evidence="1">Prevents the cell division inhibition by proteins MinC and MinD at internal division sites while permitting inhibition at polar sites. This ensures cell division at the proper site by restricting the formation of a division septum at the midpoint of the long axis of the cell.</text>
</comment>
<comment type="similarity">
    <text evidence="1">Belongs to the MinE family.</text>
</comment>
<proteinExistence type="inferred from homology"/>
<feature type="chain" id="PRO_0000298168" description="Cell division topological specificity factor">
    <location>
        <begin position="1"/>
        <end position="88"/>
    </location>
</feature>
<reference key="1">
    <citation type="journal article" date="2008" name="BMC Genomics">
        <title>Genomics of an extreme psychrophile, Psychromonas ingrahamii.</title>
        <authorList>
            <person name="Riley M."/>
            <person name="Staley J.T."/>
            <person name="Danchin A."/>
            <person name="Wang T.Z."/>
            <person name="Brettin T.S."/>
            <person name="Hauser L.J."/>
            <person name="Land M.L."/>
            <person name="Thompson L.S."/>
        </authorList>
    </citation>
    <scope>NUCLEOTIDE SEQUENCE [LARGE SCALE GENOMIC DNA]</scope>
    <source>
        <strain>DSM 17664 / CCUG 51855 / 37</strain>
    </source>
</reference>
<accession>A1STV3</accession>
<evidence type="ECO:0000255" key="1">
    <source>
        <dbReference type="HAMAP-Rule" id="MF_00262"/>
    </source>
</evidence>
<keyword id="KW-0131">Cell cycle</keyword>
<keyword id="KW-0132">Cell division</keyword>
<keyword id="KW-1185">Reference proteome</keyword>
<organism>
    <name type="scientific">Psychromonas ingrahamii (strain DSM 17664 / CCUG 51855 / 37)</name>
    <dbReference type="NCBI Taxonomy" id="357804"/>
    <lineage>
        <taxon>Bacteria</taxon>
        <taxon>Pseudomonadati</taxon>
        <taxon>Pseudomonadota</taxon>
        <taxon>Gammaproteobacteria</taxon>
        <taxon>Alteromonadales</taxon>
        <taxon>Psychromonadaceae</taxon>
        <taxon>Psychromonas</taxon>
    </lineage>
</organism>